<keyword id="KW-0025">Alternative splicing</keyword>
<keyword id="KW-0106">Calcium</keyword>
<keyword id="KW-0963">Cytoplasm</keyword>
<keyword id="KW-0227">DNA damage</keyword>
<keyword id="KW-0234">DNA repair</keyword>
<keyword id="KW-0479">Metal-binding</keyword>
<keyword id="KW-0539">Nucleus</keyword>
<keyword id="KW-1185">Reference proteome</keyword>
<keyword id="KW-0677">Repeat</keyword>
<reference key="1">
    <citation type="journal article" date="2004" name="Plant Cell">
        <title>KIC, a novel Ca2+ binding protein with one EF-hand motif, interacts with a microtubule motor protein and regulates trichome morphogenesis.</title>
        <authorList>
            <person name="Reddy V.S."/>
            <person name="Day I.S."/>
            <person name="Thomas T."/>
            <person name="Reddy A.S.N."/>
        </authorList>
    </citation>
    <scope>NUCLEOTIDE SEQUENCE [MRNA]</scope>
    <scope>FUNCTION</scope>
</reference>
<reference key="2">
    <citation type="journal article" date="1998" name="Nature">
        <title>Analysis of 1.9 Mb of contiguous sequence from chromosome 4 of Arabidopsis thaliana.</title>
        <authorList>
            <person name="Bevan M."/>
            <person name="Bancroft I."/>
            <person name="Bent E."/>
            <person name="Love K."/>
            <person name="Goodman H.M."/>
            <person name="Dean C."/>
            <person name="Bergkamp R."/>
            <person name="Dirkse W."/>
            <person name="van Staveren M."/>
            <person name="Stiekema W."/>
            <person name="Drost L."/>
            <person name="Ridley P."/>
            <person name="Hudson S.-A."/>
            <person name="Patel K."/>
            <person name="Murphy G."/>
            <person name="Piffanelli P."/>
            <person name="Wedler H."/>
            <person name="Wedler E."/>
            <person name="Wambutt R."/>
            <person name="Weitzenegger T."/>
            <person name="Pohl T."/>
            <person name="Terryn N."/>
            <person name="Gielen J."/>
            <person name="Villarroel R."/>
            <person name="De Clercq R."/>
            <person name="van Montagu M."/>
            <person name="Lecharny A."/>
            <person name="Aubourg S."/>
            <person name="Gy I."/>
            <person name="Kreis M."/>
            <person name="Lao N."/>
            <person name="Kavanagh T."/>
            <person name="Hempel S."/>
            <person name="Kotter P."/>
            <person name="Entian K.-D."/>
            <person name="Rieger M."/>
            <person name="Schaefer M."/>
            <person name="Funk B."/>
            <person name="Mueller-Auer S."/>
            <person name="Silvey M."/>
            <person name="James R."/>
            <person name="Monfort A."/>
            <person name="Pons A."/>
            <person name="Puigdomenech P."/>
            <person name="Douka A."/>
            <person name="Voukelatou E."/>
            <person name="Milioni D."/>
            <person name="Hatzopoulos P."/>
            <person name="Piravandi E."/>
            <person name="Obermaier B."/>
            <person name="Hilbert H."/>
            <person name="Duesterhoeft A."/>
            <person name="Moores T."/>
            <person name="Jones J.D.G."/>
            <person name="Eneva T."/>
            <person name="Palme K."/>
            <person name="Benes V."/>
            <person name="Rechmann S."/>
            <person name="Ansorge W."/>
            <person name="Cooke R."/>
            <person name="Berger C."/>
            <person name="Delseny M."/>
            <person name="Voet M."/>
            <person name="Volckaert G."/>
            <person name="Mewes H.-W."/>
            <person name="Klosterman S."/>
            <person name="Schueller C."/>
            <person name="Chalwatzis N."/>
        </authorList>
    </citation>
    <scope>NUCLEOTIDE SEQUENCE [LARGE SCALE GENOMIC DNA]</scope>
    <source>
        <strain>cv. Columbia</strain>
    </source>
</reference>
<reference key="3">
    <citation type="journal article" date="1999" name="Nature">
        <title>Sequence and analysis of chromosome 4 of the plant Arabidopsis thaliana.</title>
        <authorList>
            <person name="Mayer K.F.X."/>
            <person name="Schueller C."/>
            <person name="Wambutt R."/>
            <person name="Murphy G."/>
            <person name="Volckaert G."/>
            <person name="Pohl T."/>
            <person name="Duesterhoeft A."/>
            <person name="Stiekema W."/>
            <person name="Entian K.-D."/>
            <person name="Terryn N."/>
            <person name="Harris B."/>
            <person name="Ansorge W."/>
            <person name="Brandt P."/>
            <person name="Grivell L.A."/>
            <person name="Rieger M."/>
            <person name="Weichselgartner M."/>
            <person name="de Simone V."/>
            <person name="Obermaier B."/>
            <person name="Mache R."/>
            <person name="Mueller M."/>
            <person name="Kreis M."/>
            <person name="Delseny M."/>
            <person name="Puigdomenech P."/>
            <person name="Watson M."/>
            <person name="Schmidtheini T."/>
            <person name="Reichert B."/>
            <person name="Portetelle D."/>
            <person name="Perez-Alonso M."/>
            <person name="Boutry M."/>
            <person name="Bancroft I."/>
            <person name="Vos P."/>
            <person name="Hoheisel J."/>
            <person name="Zimmermann W."/>
            <person name="Wedler H."/>
            <person name="Ridley P."/>
            <person name="Langham S.-A."/>
            <person name="McCullagh B."/>
            <person name="Bilham L."/>
            <person name="Robben J."/>
            <person name="van der Schueren J."/>
            <person name="Grymonprez B."/>
            <person name="Chuang Y.-J."/>
            <person name="Vandenbussche F."/>
            <person name="Braeken M."/>
            <person name="Weltjens I."/>
            <person name="Voet M."/>
            <person name="Bastiaens I."/>
            <person name="Aert R."/>
            <person name="Defoor E."/>
            <person name="Weitzenegger T."/>
            <person name="Bothe G."/>
            <person name="Ramsperger U."/>
            <person name="Hilbert H."/>
            <person name="Braun M."/>
            <person name="Holzer E."/>
            <person name="Brandt A."/>
            <person name="Peters S."/>
            <person name="van Staveren M."/>
            <person name="Dirkse W."/>
            <person name="Mooijman P."/>
            <person name="Klein Lankhorst R."/>
            <person name="Rose M."/>
            <person name="Hauf J."/>
            <person name="Koetter P."/>
            <person name="Berneiser S."/>
            <person name="Hempel S."/>
            <person name="Feldpausch M."/>
            <person name="Lamberth S."/>
            <person name="Van den Daele H."/>
            <person name="De Keyser A."/>
            <person name="Buysshaert C."/>
            <person name="Gielen J."/>
            <person name="Villarroel R."/>
            <person name="De Clercq R."/>
            <person name="van Montagu M."/>
            <person name="Rogers J."/>
            <person name="Cronin A."/>
            <person name="Quail M.A."/>
            <person name="Bray-Allen S."/>
            <person name="Clark L."/>
            <person name="Doggett J."/>
            <person name="Hall S."/>
            <person name="Kay M."/>
            <person name="Lennard N."/>
            <person name="McLay K."/>
            <person name="Mayes R."/>
            <person name="Pettett A."/>
            <person name="Rajandream M.A."/>
            <person name="Lyne M."/>
            <person name="Benes V."/>
            <person name="Rechmann S."/>
            <person name="Borkova D."/>
            <person name="Bloecker H."/>
            <person name="Scharfe M."/>
            <person name="Grimm M."/>
            <person name="Loehnert T.-H."/>
            <person name="Dose S."/>
            <person name="de Haan M."/>
            <person name="Maarse A.C."/>
            <person name="Schaefer M."/>
            <person name="Mueller-Auer S."/>
            <person name="Gabel C."/>
            <person name="Fuchs M."/>
            <person name="Fartmann B."/>
            <person name="Granderath K."/>
            <person name="Dauner D."/>
            <person name="Herzl A."/>
            <person name="Neumann S."/>
            <person name="Argiriou A."/>
            <person name="Vitale D."/>
            <person name="Liguori R."/>
            <person name="Piravandi E."/>
            <person name="Massenet O."/>
            <person name="Quigley F."/>
            <person name="Clabauld G."/>
            <person name="Muendlein A."/>
            <person name="Felber R."/>
            <person name="Schnabl S."/>
            <person name="Hiller R."/>
            <person name="Schmidt W."/>
            <person name="Lecharny A."/>
            <person name="Aubourg S."/>
            <person name="Chefdor F."/>
            <person name="Cooke R."/>
            <person name="Berger C."/>
            <person name="Monfort A."/>
            <person name="Casacuberta E."/>
            <person name="Gibbons T."/>
            <person name="Weber N."/>
            <person name="Vandenbol M."/>
            <person name="Bargues M."/>
            <person name="Terol J."/>
            <person name="Torres A."/>
            <person name="Perez-Perez A."/>
            <person name="Purnelle B."/>
            <person name="Bent E."/>
            <person name="Johnson S."/>
            <person name="Tacon D."/>
            <person name="Jesse T."/>
            <person name="Heijnen L."/>
            <person name="Schwarz S."/>
            <person name="Scholler P."/>
            <person name="Heber S."/>
            <person name="Francs P."/>
            <person name="Bielke C."/>
            <person name="Frishman D."/>
            <person name="Haase D."/>
            <person name="Lemcke K."/>
            <person name="Mewes H.-W."/>
            <person name="Stocker S."/>
            <person name="Zaccaria P."/>
            <person name="Bevan M."/>
            <person name="Wilson R.K."/>
            <person name="de la Bastide M."/>
            <person name="Habermann K."/>
            <person name="Parnell L."/>
            <person name="Dedhia N."/>
            <person name="Gnoj L."/>
            <person name="Schutz K."/>
            <person name="Huang E."/>
            <person name="Spiegel L."/>
            <person name="Sekhon M."/>
            <person name="Murray J."/>
            <person name="Sheet P."/>
            <person name="Cordes M."/>
            <person name="Abu-Threideh J."/>
            <person name="Stoneking T."/>
            <person name="Kalicki J."/>
            <person name="Graves T."/>
            <person name="Harmon G."/>
            <person name="Edwards J."/>
            <person name="Latreille P."/>
            <person name="Courtney L."/>
            <person name="Cloud J."/>
            <person name="Abbott A."/>
            <person name="Scott K."/>
            <person name="Johnson D."/>
            <person name="Minx P."/>
            <person name="Bentley D."/>
            <person name="Fulton B."/>
            <person name="Miller N."/>
            <person name="Greco T."/>
            <person name="Kemp K."/>
            <person name="Kramer J."/>
            <person name="Fulton L."/>
            <person name="Mardis E."/>
            <person name="Dante M."/>
            <person name="Pepin K."/>
            <person name="Hillier L.W."/>
            <person name="Nelson J."/>
            <person name="Spieth J."/>
            <person name="Ryan E."/>
            <person name="Andrews S."/>
            <person name="Geisel C."/>
            <person name="Layman D."/>
            <person name="Du H."/>
            <person name="Ali J."/>
            <person name="Berghoff A."/>
            <person name="Jones K."/>
            <person name="Drone K."/>
            <person name="Cotton M."/>
            <person name="Joshu C."/>
            <person name="Antonoiu B."/>
            <person name="Zidanic M."/>
            <person name="Strong C."/>
            <person name="Sun H."/>
            <person name="Lamar B."/>
            <person name="Yordan C."/>
            <person name="Ma P."/>
            <person name="Zhong J."/>
            <person name="Preston R."/>
            <person name="Vil D."/>
            <person name="Shekher M."/>
            <person name="Matero A."/>
            <person name="Shah R."/>
            <person name="Swaby I.K."/>
            <person name="O'Shaughnessy A."/>
            <person name="Rodriguez M."/>
            <person name="Hoffman J."/>
            <person name="Till S."/>
            <person name="Granat S."/>
            <person name="Shohdy N."/>
            <person name="Hasegawa A."/>
            <person name="Hameed A."/>
            <person name="Lodhi M."/>
            <person name="Johnson A."/>
            <person name="Chen E."/>
            <person name="Marra M.A."/>
            <person name="Martienssen R."/>
            <person name="McCombie W.R."/>
        </authorList>
    </citation>
    <scope>NUCLEOTIDE SEQUENCE [LARGE SCALE GENOMIC DNA]</scope>
    <source>
        <strain>cv. Columbia</strain>
    </source>
</reference>
<reference key="4">
    <citation type="journal article" date="2017" name="Plant J.">
        <title>Araport11: a complete reannotation of the Arabidopsis thaliana reference genome.</title>
        <authorList>
            <person name="Cheng C.Y."/>
            <person name="Krishnakumar V."/>
            <person name="Chan A.P."/>
            <person name="Thibaud-Nissen F."/>
            <person name="Schobel S."/>
            <person name="Town C.D."/>
        </authorList>
    </citation>
    <scope>GENOME REANNOTATION</scope>
    <source>
        <strain>cv. Columbia</strain>
    </source>
</reference>
<reference key="5">
    <citation type="submission" date="2006-03" db="EMBL/GenBank/DDBJ databases">
        <title>Arabidopsis ORF clones.</title>
        <authorList>
            <person name="Kim C.J."/>
            <person name="Chen H."/>
            <person name="Shinn P."/>
            <person name="Ecker J.R."/>
        </authorList>
    </citation>
    <scope>NUCLEOTIDE SEQUENCE [LARGE SCALE MRNA]</scope>
    <source>
        <strain>cv. Columbia</strain>
    </source>
</reference>
<reference key="6">
    <citation type="submission" date="2002-03" db="EMBL/GenBank/DDBJ databases">
        <title>Full-length cDNA from Arabidopsis thaliana.</title>
        <authorList>
            <person name="Brover V.V."/>
            <person name="Troukhan M.E."/>
            <person name="Alexandrov N.A."/>
            <person name="Lu Y.-P."/>
            <person name="Flavell R.B."/>
            <person name="Feldmann K.A."/>
        </authorList>
    </citation>
    <scope>NUCLEOTIDE SEQUENCE [LARGE SCALE MRNA]</scope>
</reference>
<reference key="7">
    <citation type="journal article" date="2003" name="New Phytol.">
        <title>Calmodulins and related potential calcium sensors of Arabidopsis.</title>
        <authorList>
            <person name="McCormack E."/>
            <person name="Braam J."/>
        </authorList>
    </citation>
    <scope>GENE FAMILY</scope>
    <scope>NOMENCLATURE</scope>
</reference>
<reference key="8">
    <citation type="journal article" date="2004" name="Plant Cell">
        <title>CENTRIN2 modulates homologous recombination and nucleotide excision repair in Arabidopsis.</title>
        <authorList>
            <person name="Molinier J."/>
            <person name="Ramos C."/>
            <person name="Fritsch O."/>
            <person name="Hohn B."/>
        </authorList>
    </citation>
    <scope>FUNCTION</scope>
    <scope>INDUCTION BY UV-C</scope>
    <scope>TISSUE SPECIFICITY</scope>
</reference>
<reference key="9">
    <citation type="journal article" date="2006" name="Plant Mol. Biol.">
        <title>CENTRIN2 interacts with the Arabidopsis homolog of the human XPC protein (AtRAD4) and contributes to efficient synthesis-dependent repair of bulky DNA lesions.</title>
        <authorList>
            <person name="Liang L."/>
            <person name="Flury S."/>
            <person name="Kalck V."/>
            <person name="Hohn B."/>
            <person name="Molinier J."/>
        </authorList>
    </citation>
    <scope>FUNCTION</scope>
    <scope>INTERACTION WITH RAD4</scope>
    <scope>SUBCELLULAR LOCATION</scope>
    <scope>DOMAIN</scope>
</reference>
<reference key="10">
    <citation type="journal article" date="2010" name="Plant J.">
        <title>Arabidopsis homolog of the yeast TREX-2 mRNA export complex: components and anchoring nucleoporin.</title>
        <authorList>
            <person name="Lu Q."/>
            <person name="Tang X."/>
            <person name="Tian G."/>
            <person name="Wang F."/>
            <person name="Liu K."/>
            <person name="Nguyen V."/>
            <person name="Kohalmi S.E."/>
            <person name="Keller W.A."/>
            <person name="Tsang E.W."/>
            <person name="Harada J.J."/>
            <person name="Rothstein S.J."/>
            <person name="Cui Y."/>
        </authorList>
    </citation>
    <scope>INTERACTION WITH SAC3B</scope>
</reference>
<sequence>MSEAAQLRRGLKPKGKTYGLTNQKRREIREIFDLFDIDGSGSIDASELNVAMRSLGFEMNNQQINELMAEVDKNQSGAIDFDEFVHMMTTKFGERDSIDELSKAFKIIDHDNNGKISPRDIKMIAKELGENFTDNDIEEMIEEADRDKDGEVNLEEFMKMMKRTSYG</sequence>
<dbReference type="EMBL" id="AY363869">
    <property type="protein sequence ID" value="AAR16087.1"/>
    <property type="molecule type" value="mRNA"/>
</dbReference>
<dbReference type="EMBL" id="Z99707">
    <property type="protein sequence ID" value="CAB16762.1"/>
    <property type="molecule type" value="Genomic_DNA"/>
</dbReference>
<dbReference type="EMBL" id="AL161590">
    <property type="protein sequence ID" value="CAB80367.1"/>
    <property type="molecule type" value="Genomic_DNA"/>
</dbReference>
<dbReference type="EMBL" id="CP002687">
    <property type="protein sequence ID" value="AEE86734.1"/>
    <property type="molecule type" value="Genomic_DNA"/>
</dbReference>
<dbReference type="EMBL" id="BT024826">
    <property type="protein sequence ID" value="ABD60709.1"/>
    <property type="molecule type" value="mRNA"/>
</dbReference>
<dbReference type="EMBL" id="AY086644">
    <property type="protein sequence ID" value="AAM63702.1"/>
    <property type="molecule type" value="mRNA"/>
</dbReference>
<dbReference type="PIR" id="B85437">
    <property type="entry name" value="B85437"/>
</dbReference>
<dbReference type="RefSeq" id="NP_195418.1">
    <molecule id="O23184-1"/>
    <property type="nucleotide sequence ID" value="NM_119864.5"/>
</dbReference>
<dbReference type="SMR" id="O23184"/>
<dbReference type="BioGRID" id="15136">
    <property type="interactions" value="5"/>
</dbReference>
<dbReference type="FunCoup" id="O23184">
    <property type="interactions" value="528"/>
</dbReference>
<dbReference type="IntAct" id="O23184">
    <property type="interactions" value="2"/>
</dbReference>
<dbReference type="STRING" id="3702.O23184"/>
<dbReference type="iPTMnet" id="O23184"/>
<dbReference type="PaxDb" id="3702-AT4G37010.2"/>
<dbReference type="EnsemblPlants" id="AT4G37010.1">
    <molecule id="O23184-1"/>
    <property type="protein sequence ID" value="AT4G37010.1"/>
    <property type="gene ID" value="AT4G37010"/>
</dbReference>
<dbReference type="GeneID" id="829855"/>
<dbReference type="Gramene" id="AT4G37010.1">
    <molecule id="O23184-1"/>
    <property type="protein sequence ID" value="AT4G37010.1"/>
    <property type="gene ID" value="AT4G37010"/>
</dbReference>
<dbReference type="KEGG" id="ath:AT4G37010"/>
<dbReference type="Araport" id="AT4G37010"/>
<dbReference type="TAIR" id="AT4G37010">
    <property type="gene designation" value="CEN2"/>
</dbReference>
<dbReference type="eggNOG" id="KOG0028">
    <property type="taxonomic scope" value="Eukaryota"/>
</dbReference>
<dbReference type="HOGENOM" id="CLU_061288_18_2_1"/>
<dbReference type="InParanoid" id="O23184"/>
<dbReference type="OMA" id="MNNEQIN"/>
<dbReference type="PhylomeDB" id="O23184"/>
<dbReference type="PRO" id="PR:O23184"/>
<dbReference type="Proteomes" id="UP000006548">
    <property type="component" value="Chromosome 4"/>
</dbReference>
<dbReference type="ExpressionAtlas" id="O23184">
    <property type="expression patterns" value="baseline and differential"/>
</dbReference>
<dbReference type="GO" id="GO:0005737">
    <property type="term" value="C:cytoplasm"/>
    <property type="evidence" value="ECO:0007669"/>
    <property type="project" value="UniProtKB-SubCell"/>
</dbReference>
<dbReference type="GO" id="GO:0005634">
    <property type="term" value="C:nucleus"/>
    <property type="evidence" value="ECO:0007669"/>
    <property type="project" value="UniProtKB-SubCell"/>
</dbReference>
<dbReference type="GO" id="GO:0005509">
    <property type="term" value="F:calcium ion binding"/>
    <property type="evidence" value="ECO:0007669"/>
    <property type="project" value="InterPro"/>
</dbReference>
<dbReference type="GO" id="GO:0006281">
    <property type="term" value="P:DNA repair"/>
    <property type="evidence" value="ECO:0007669"/>
    <property type="project" value="UniProtKB-KW"/>
</dbReference>
<dbReference type="CDD" id="cd00051">
    <property type="entry name" value="EFh"/>
    <property type="match status" value="2"/>
</dbReference>
<dbReference type="FunFam" id="1.10.238.10:FF:000268">
    <property type="entry name" value="Centrin 2"/>
    <property type="match status" value="1"/>
</dbReference>
<dbReference type="FunFam" id="1.10.238.10:FF:000256">
    <property type="entry name" value="probable calcium-binding protein CML20"/>
    <property type="match status" value="1"/>
</dbReference>
<dbReference type="Gene3D" id="1.10.238.10">
    <property type="entry name" value="EF-hand"/>
    <property type="match status" value="2"/>
</dbReference>
<dbReference type="InterPro" id="IPR050230">
    <property type="entry name" value="CALM/Myosin/TropC-like"/>
</dbReference>
<dbReference type="InterPro" id="IPR011992">
    <property type="entry name" value="EF-hand-dom_pair"/>
</dbReference>
<dbReference type="InterPro" id="IPR018247">
    <property type="entry name" value="EF_Hand_1_Ca_BS"/>
</dbReference>
<dbReference type="InterPro" id="IPR002048">
    <property type="entry name" value="EF_hand_dom"/>
</dbReference>
<dbReference type="PANTHER" id="PTHR23048:SF59">
    <property type="entry name" value="EF-HAND SUPERFAMILY PROTEIN"/>
    <property type="match status" value="1"/>
</dbReference>
<dbReference type="PANTHER" id="PTHR23048">
    <property type="entry name" value="MYOSIN LIGHT CHAIN 1, 3"/>
    <property type="match status" value="1"/>
</dbReference>
<dbReference type="Pfam" id="PF13499">
    <property type="entry name" value="EF-hand_7"/>
    <property type="match status" value="2"/>
</dbReference>
<dbReference type="SMART" id="SM00054">
    <property type="entry name" value="EFh"/>
    <property type="match status" value="4"/>
</dbReference>
<dbReference type="SUPFAM" id="SSF47473">
    <property type="entry name" value="EF-hand"/>
    <property type="match status" value="1"/>
</dbReference>
<dbReference type="PROSITE" id="PS00018">
    <property type="entry name" value="EF_HAND_1"/>
    <property type="match status" value="4"/>
</dbReference>
<dbReference type="PROSITE" id="PS50222">
    <property type="entry name" value="EF_HAND_2"/>
    <property type="match status" value="4"/>
</dbReference>
<protein>
    <recommendedName>
        <fullName evidence="7">Calcium-binding protein CML19</fullName>
    </recommendedName>
    <alternativeName>
        <fullName evidence="7">Calmodulin-like protein 19</fullName>
    </alternativeName>
    <alternativeName>
        <fullName evidence="6">Centrin 2</fullName>
        <shortName evidence="6">AtCEN2</shortName>
    </alternativeName>
</protein>
<gene>
    <name evidence="7" type="primary">CML19</name>
    <name evidence="6" type="synonym">CEN2</name>
    <name evidence="9" type="ordered locus">At4g37010</name>
    <name type="ORF">AP22.11</name>
    <name evidence="10" type="ORF">C7A10.350</name>
</gene>
<proteinExistence type="evidence at protein level"/>
<feature type="chain" id="PRO_0000342948" description="Calcium-binding protein CML19">
    <location>
        <begin position="1"/>
        <end position="167"/>
    </location>
</feature>
<feature type="domain" description="EF-hand 1" evidence="1">
    <location>
        <begin position="23"/>
        <end position="58"/>
    </location>
</feature>
<feature type="domain" description="EF-hand 2" evidence="1">
    <location>
        <begin position="59"/>
        <end position="94"/>
    </location>
</feature>
<feature type="domain" description="EF-hand 3" evidence="1">
    <location>
        <begin position="96"/>
        <end position="131"/>
    </location>
</feature>
<feature type="domain" description="EF-hand 4" evidence="1">
    <location>
        <begin position="132"/>
        <end position="167"/>
    </location>
</feature>
<feature type="binding site" evidence="1">
    <location>
        <position position="36"/>
    </location>
    <ligand>
        <name>Ca(2+)</name>
        <dbReference type="ChEBI" id="CHEBI:29108"/>
        <label>1</label>
    </ligand>
</feature>
<feature type="binding site" evidence="1">
    <location>
        <position position="38"/>
    </location>
    <ligand>
        <name>Ca(2+)</name>
        <dbReference type="ChEBI" id="CHEBI:29108"/>
        <label>1</label>
    </ligand>
</feature>
<feature type="binding site" evidence="1">
    <location>
        <position position="40"/>
    </location>
    <ligand>
        <name>Ca(2+)</name>
        <dbReference type="ChEBI" id="CHEBI:29108"/>
        <label>1</label>
    </ligand>
</feature>
<feature type="binding site" evidence="1">
    <location>
        <position position="42"/>
    </location>
    <ligand>
        <name>Ca(2+)</name>
        <dbReference type="ChEBI" id="CHEBI:29108"/>
        <label>1</label>
    </ligand>
</feature>
<feature type="binding site" evidence="1">
    <location>
        <position position="47"/>
    </location>
    <ligand>
        <name>Ca(2+)</name>
        <dbReference type="ChEBI" id="CHEBI:29108"/>
        <label>1</label>
    </ligand>
</feature>
<feature type="binding site" evidence="1">
    <location>
        <position position="72"/>
    </location>
    <ligand>
        <name>Ca(2+)</name>
        <dbReference type="ChEBI" id="CHEBI:29108"/>
        <label>2</label>
    </ligand>
</feature>
<feature type="binding site" evidence="1">
    <location>
        <position position="74"/>
    </location>
    <ligand>
        <name>Ca(2+)</name>
        <dbReference type="ChEBI" id="CHEBI:29108"/>
        <label>2</label>
    </ligand>
</feature>
<feature type="binding site" evidence="1">
    <location>
        <position position="76"/>
    </location>
    <ligand>
        <name>Ca(2+)</name>
        <dbReference type="ChEBI" id="CHEBI:29108"/>
        <label>2</label>
    </ligand>
</feature>
<feature type="binding site" evidence="1">
    <location>
        <position position="83"/>
    </location>
    <ligand>
        <name>Ca(2+)</name>
        <dbReference type="ChEBI" id="CHEBI:29108"/>
        <label>2</label>
    </ligand>
</feature>
<feature type="binding site" evidence="1">
    <location>
        <position position="109"/>
    </location>
    <ligand>
        <name>Ca(2+)</name>
        <dbReference type="ChEBI" id="CHEBI:29108"/>
        <label>3</label>
    </ligand>
</feature>
<feature type="binding site" evidence="1">
    <location>
        <position position="111"/>
    </location>
    <ligand>
        <name>Ca(2+)</name>
        <dbReference type="ChEBI" id="CHEBI:29108"/>
        <label>3</label>
    </ligand>
</feature>
<feature type="binding site" evidence="1">
    <location>
        <position position="113"/>
    </location>
    <ligand>
        <name>Ca(2+)</name>
        <dbReference type="ChEBI" id="CHEBI:29108"/>
        <label>3</label>
    </ligand>
</feature>
<feature type="binding site" evidence="1">
    <location>
        <position position="115"/>
    </location>
    <ligand>
        <name>Ca(2+)</name>
        <dbReference type="ChEBI" id="CHEBI:29108"/>
        <label>3</label>
    </ligand>
</feature>
<feature type="binding site" evidence="1">
    <location>
        <position position="120"/>
    </location>
    <ligand>
        <name>Ca(2+)</name>
        <dbReference type="ChEBI" id="CHEBI:29108"/>
        <label>3</label>
    </ligand>
</feature>
<feature type="binding site" evidence="1">
    <location>
        <position position="145"/>
    </location>
    <ligand>
        <name>Ca(2+)</name>
        <dbReference type="ChEBI" id="CHEBI:29108"/>
        <label>4</label>
    </ligand>
</feature>
<feature type="binding site" evidence="1">
    <location>
        <position position="147"/>
    </location>
    <ligand>
        <name>Ca(2+)</name>
        <dbReference type="ChEBI" id="CHEBI:29108"/>
        <label>4</label>
    </ligand>
</feature>
<feature type="binding site" evidence="1">
    <location>
        <position position="149"/>
    </location>
    <ligand>
        <name>Ca(2+)</name>
        <dbReference type="ChEBI" id="CHEBI:29108"/>
        <label>4</label>
    </ligand>
</feature>
<feature type="binding site" evidence="1">
    <location>
        <position position="151"/>
    </location>
    <ligand>
        <name>Ca(2+)</name>
        <dbReference type="ChEBI" id="CHEBI:29108"/>
        <label>4</label>
    </ligand>
</feature>
<feature type="binding site" evidence="1">
    <location>
        <position position="156"/>
    </location>
    <ligand>
        <name>Ca(2+)</name>
        <dbReference type="ChEBI" id="CHEBI:29108"/>
        <label>4</label>
    </ligand>
</feature>
<feature type="sequence conflict" description="In Ref. 6; AAM63702." evidence="8" ref="6">
    <original>N</original>
    <variation>S</variation>
    <location>
        <position position="113"/>
    </location>
</feature>
<feature type="sequence conflict" description="In Ref. 6; AAM63702." evidence="8" ref="6">
    <original>Y</original>
    <variation>F</variation>
    <location>
        <position position="166"/>
    </location>
</feature>
<comment type="function">
    <text evidence="2 3 4">Potential calcium sensor that binds calcium in vitro (PubMed:14688294). Modulates homologous recombination and nucleotide excision repair (NER) (PubMed:15155891). Involved in the early response to UV irradiation (PubMed:16786311).</text>
</comment>
<comment type="subunit">
    <text evidence="4 5">Interacts with RAD4 (PubMed:16786311). Calcium is required for this interaction (PubMed:16786311). Interacts with SAC3B (PubMed:19843313).</text>
</comment>
<comment type="subcellular location">
    <subcellularLocation>
        <location evidence="4">Cytoplasm</location>
    </subcellularLocation>
    <subcellularLocation>
        <location evidence="4">Nucleus</location>
    </subcellularLocation>
    <text evidence="4">Localizes to the nucleus after exposure to UV-C and cicplatin.</text>
</comment>
<comment type="alternative products">
    <event type="alternative splicing"/>
    <isoform>
        <id>O23184-1</id>
        <name>1</name>
        <sequence type="displayed"/>
    </isoform>
    <text>A number of isoforms are produced. According to EST sequences.</text>
</comment>
<comment type="tissue specificity">
    <text evidence="3">Expressed in leaves, roots, and at lower level in stems. Barely detectable in flower buds and flowers.</text>
</comment>
<comment type="induction">
    <text evidence="3">Up-regulated by UV-C induced DNA damage, but not by DNA double-strand breaks caused by bleomycin.</text>
</comment>
<comment type="domain">
    <text evidence="4">The C-terminal EF-hand is necessary for the binding to RAD4 and for efficient nucleotide excision repair (NER).</text>
</comment>
<comment type="similarity">
    <text evidence="8">Belongs to the centrin family.</text>
</comment>
<comment type="caution">
    <text evidence="8">Although assigned as a calmodulin family member by Ref.7, it only contains EF-hand domains.</text>
</comment>
<organism>
    <name type="scientific">Arabidopsis thaliana</name>
    <name type="common">Mouse-ear cress</name>
    <dbReference type="NCBI Taxonomy" id="3702"/>
    <lineage>
        <taxon>Eukaryota</taxon>
        <taxon>Viridiplantae</taxon>
        <taxon>Streptophyta</taxon>
        <taxon>Embryophyta</taxon>
        <taxon>Tracheophyta</taxon>
        <taxon>Spermatophyta</taxon>
        <taxon>Magnoliopsida</taxon>
        <taxon>eudicotyledons</taxon>
        <taxon>Gunneridae</taxon>
        <taxon>Pentapetalae</taxon>
        <taxon>rosids</taxon>
        <taxon>malvids</taxon>
        <taxon>Brassicales</taxon>
        <taxon>Brassicaceae</taxon>
        <taxon>Camelineae</taxon>
        <taxon>Arabidopsis</taxon>
    </lineage>
</organism>
<evidence type="ECO:0000255" key="1">
    <source>
        <dbReference type="PROSITE-ProRule" id="PRU00448"/>
    </source>
</evidence>
<evidence type="ECO:0000269" key="2">
    <source>
    </source>
</evidence>
<evidence type="ECO:0000269" key="3">
    <source>
    </source>
</evidence>
<evidence type="ECO:0000269" key="4">
    <source>
    </source>
</evidence>
<evidence type="ECO:0000269" key="5">
    <source>
    </source>
</evidence>
<evidence type="ECO:0000303" key="6">
    <source>
    </source>
</evidence>
<evidence type="ECO:0000303" key="7">
    <source ref="7"/>
</evidence>
<evidence type="ECO:0000305" key="8"/>
<evidence type="ECO:0000312" key="9">
    <source>
        <dbReference type="Araport" id="AT4G37010"/>
    </source>
</evidence>
<evidence type="ECO:0000312" key="10">
    <source>
        <dbReference type="EMBL" id="CAB16762.1"/>
    </source>
</evidence>
<accession>O23184</accession>
<accession>Q8LCE6</accession>
<name>CML19_ARATH</name>